<gene>
    <name evidence="1" type="primary">panC</name>
    <name type="ordered locus">LEPBI_I1824</name>
</gene>
<reference key="1">
    <citation type="journal article" date="2008" name="PLoS ONE">
        <title>Genome sequence of the saprophyte Leptospira biflexa provides insights into the evolution of Leptospira and the pathogenesis of leptospirosis.</title>
        <authorList>
            <person name="Picardeau M."/>
            <person name="Bulach D.M."/>
            <person name="Bouchier C."/>
            <person name="Zuerner R.L."/>
            <person name="Zidane N."/>
            <person name="Wilson P.J."/>
            <person name="Creno S."/>
            <person name="Kuczek E.S."/>
            <person name="Bommezzadri S."/>
            <person name="Davis J.C."/>
            <person name="McGrath A."/>
            <person name="Johnson M.J."/>
            <person name="Boursaux-Eude C."/>
            <person name="Seemann T."/>
            <person name="Rouy Z."/>
            <person name="Coppel R.L."/>
            <person name="Rood J.I."/>
            <person name="Lajus A."/>
            <person name="Davies J.K."/>
            <person name="Medigue C."/>
            <person name="Adler B."/>
        </authorList>
    </citation>
    <scope>NUCLEOTIDE SEQUENCE [LARGE SCALE GENOMIC DNA]</scope>
    <source>
        <strain>Patoc 1 / ATCC 23582 / Paris</strain>
    </source>
</reference>
<proteinExistence type="inferred from homology"/>
<protein>
    <recommendedName>
        <fullName evidence="1">Pantothenate synthetase</fullName>
        <shortName evidence="1">PS</shortName>
        <ecNumber evidence="1">6.3.2.1</ecNumber>
    </recommendedName>
    <alternativeName>
        <fullName evidence="1">Pantoate--beta-alanine ligase</fullName>
    </alternativeName>
    <alternativeName>
        <fullName evidence="1">Pantoate-activating enzyme</fullName>
    </alternativeName>
</protein>
<keyword id="KW-0067">ATP-binding</keyword>
<keyword id="KW-0963">Cytoplasm</keyword>
<keyword id="KW-0436">Ligase</keyword>
<keyword id="KW-0547">Nucleotide-binding</keyword>
<keyword id="KW-0566">Pantothenate biosynthesis</keyword>
<keyword id="KW-1185">Reference proteome</keyword>
<sequence>MIVVSEIADLKTIISEWKQNQETIGFCPTMGTLHDGHMDLVKTSKGQCTKTIVSIFINPTQFNDPKDFDAYPKNTESDLKLCEEHGVDLVFLPSVEVIYPKSQTPIQMSIPSLQTTLCGRTRPGHFEGVLQIVSKLFHLTEPNYGFFGLKDYQQYRIISAMVEELNFPIKILGVPTKRESDGLAMSSRNLRLSPKDRETASLIPRMFQLAKKTLLGGEKNLIVWKEILTDFLLTGSNVKIDYLEIVDPITLQPLSNLNGELLLATAVFVGEVRLIDNEVLVSP</sequence>
<evidence type="ECO:0000255" key="1">
    <source>
        <dbReference type="HAMAP-Rule" id="MF_00158"/>
    </source>
</evidence>
<feature type="chain" id="PRO_1000097080" description="Pantothenate synthetase">
    <location>
        <begin position="1"/>
        <end position="283"/>
    </location>
</feature>
<feature type="active site" description="Proton donor" evidence="1">
    <location>
        <position position="37"/>
    </location>
</feature>
<feature type="binding site" evidence="1">
    <location>
        <begin position="30"/>
        <end position="37"/>
    </location>
    <ligand>
        <name>ATP</name>
        <dbReference type="ChEBI" id="CHEBI:30616"/>
    </ligand>
</feature>
<feature type="binding site" evidence="1">
    <location>
        <position position="61"/>
    </location>
    <ligand>
        <name>(R)-pantoate</name>
        <dbReference type="ChEBI" id="CHEBI:15980"/>
    </ligand>
</feature>
<feature type="binding site" evidence="1">
    <location>
        <position position="61"/>
    </location>
    <ligand>
        <name>beta-alanine</name>
        <dbReference type="ChEBI" id="CHEBI:57966"/>
    </ligand>
</feature>
<feature type="binding site" evidence="1">
    <location>
        <begin position="148"/>
        <end position="151"/>
    </location>
    <ligand>
        <name>ATP</name>
        <dbReference type="ChEBI" id="CHEBI:30616"/>
    </ligand>
</feature>
<feature type="binding site" evidence="1">
    <location>
        <position position="154"/>
    </location>
    <ligand>
        <name>(R)-pantoate</name>
        <dbReference type="ChEBI" id="CHEBI:15980"/>
    </ligand>
</feature>
<feature type="binding site" evidence="1">
    <location>
        <begin position="185"/>
        <end position="188"/>
    </location>
    <ligand>
        <name>ATP</name>
        <dbReference type="ChEBI" id="CHEBI:30616"/>
    </ligand>
</feature>
<name>PANC_LEPBP</name>
<accession>B0SS40</accession>
<dbReference type="EC" id="6.3.2.1" evidence="1"/>
<dbReference type="EMBL" id="CP000786">
    <property type="protein sequence ID" value="ABZ97930.1"/>
    <property type="molecule type" value="Genomic_DNA"/>
</dbReference>
<dbReference type="RefSeq" id="WP_012388808.1">
    <property type="nucleotide sequence ID" value="NC_010602.1"/>
</dbReference>
<dbReference type="SMR" id="B0SS40"/>
<dbReference type="STRING" id="456481.LEPBI_I1824"/>
<dbReference type="KEGG" id="lbi:LEPBI_I1824"/>
<dbReference type="HOGENOM" id="CLU_047148_0_0_12"/>
<dbReference type="OrthoDB" id="9773087at2"/>
<dbReference type="BioCyc" id="LBIF456481:LEPBI_RS09015-MONOMER"/>
<dbReference type="UniPathway" id="UPA00028">
    <property type="reaction ID" value="UER00005"/>
</dbReference>
<dbReference type="Proteomes" id="UP000001847">
    <property type="component" value="Chromosome I"/>
</dbReference>
<dbReference type="GO" id="GO:0005829">
    <property type="term" value="C:cytosol"/>
    <property type="evidence" value="ECO:0007669"/>
    <property type="project" value="TreeGrafter"/>
</dbReference>
<dbReference type="GO" id="GO:0005524">
    <property type="term" value="F:ATP binding"/>
    <property type="evidence" value="ECO:0007669"/>
    <property type="project" value="UniProtKB-KW"/>
</dbReference>
<dbReference type="GO" id="GO:0004592">
    <property type="term" value="F:pantoate-beta-alanine ligase activity"/>
    <property type="evidence" value="ECO:0007669"/>
    <property type="project" value="UniProtKB-UniRule"/>
</dbReference>
<dbReference type="GO" id="GO:0015940">
    <property type="term" value="P:pantothenate biosynthetic process"/>
    <property type="evidence" value="ECO:0007669"/>
    <property type="project" value="UniProtKB-UniRule"/>
</dbReference>
<dbReference type="CDD" id="cd00560">
    <property type="entry name" value="PanC"/>
    <property type="match status" value="1"/>
</dbReference>
<dbReference type="Gene3D" id="3.40.50.620">
    <property type="entry name" value="HUPs"/>
    <property type="match status" value="1"/>
</dbReference>
<dbReference type="Gene3D" id="3.30.1300.10">
    <property type="entry name" value="Pantoate-beta-alanine ligase, C-terminal domain"/>
    <property type="match status" value="1"/>
</dbReference>
<dbReference type="HAMAP" id="MF_00158">
    <property type="entry name" value="PanC"/>
    <property type="match status" value="1"/>
</dbReference>
<dbReference type="InterPro" id="IPR003721">
    <property type="entry name" value="Pantoate_ligase"/>
</dbReference>
<dbReference type="InterPro" id="IPR042176">
    <property type="entry name" value="Pantoate_ligase_C"/>
</dbReference>
<dbReference type="InterPro" id="IPR014729">
    <property type="entry name" value="Rossmann-like_a/b/a_fold"/>
</dbReference>
<dbReference type="NCBIfam" id="TIGR00018">
    <property type="entry name" value="panC"/>
    <property type="match status" value="1"/>
</dbReference>
<dbReference type="PANTHER" id="PTHR21299">
    <property type="entry name" value="CYTIDYLATE KINASE/PANTOATE-BETA-ALANINE LIGASE"/>
    <property type="match status" value="1"/>
</dbReference>
<dbReference type="PANTHER" id="PTHR21299:SF1">
    <property type="entry name" value="PANTOATE--BETA-ALANINE LIGASE"/>
    <property type="match status" value="1"/>
</dbReference>
<dbReference type="Pfam" id="PF02569">
    <property type="entry name" value="Pantoate_ligase"/>
    <property type="match status" value="1"/>
</dbReference>
<dbReference type="SUPFAM" id="SSF52374">
    <property type="entry name" value="Nucleotidylyl transferase"/>
    <property type="match status" value="1"/>
</dbReference>
<comment type="function">
    <text evidence="1">Catalyzes the condensation of pantoate with beta-alanine in an ATP-dependent reaction via a pantoyl-adenylate intermediate.</text>
</comment>
<comment type="catalytic activity">
    <reaction evidence="1">
        <text>(R)-pantoate + beta-alanine + ATP = (R)-pantothenate + AMP + diphosphate + H(+)</text>
        <dbReference type="Rhea" id="RHEA:10912"/>
        <dbReference type="ChEBI" id="CHEBI:15378"/>
        <dbReference type="ChEBI" id="CHEBI:15980"/>
        <dbReference type="ChEBI" id="CHEBI:29032"/>
        <dbReference type="ChEBI" id="CHEBI:30616"/>
        <dbReference type="ChEBI" id="CHEBI:33019"/>
        <dbReference type="ChEBI" id="CHEBI:57966"/>
        <dbReference type="ChEBI" id="CHEBI:456215"/>
        <dbReference type="EC" id="6.3.2.1"/>
    </reaction>
</comment>
<comment type="pathway">
    <text evidence="1">Cofactor biosynthesis; (R)-pantothenate biosynthesis; (R)-pantothenate from (R)-pantoate and beta-alanine: step 1/1.</text>
</comment>
<comment type="subunit">
    <text evidence="1">Homodimer.</text>
</comment>
<comment type="subcellular location">
    <subcellularLocation>
        <location evidence="1">Cytoplasm</location>
    </subcellularLocation>
</comment>
<comment type="miscellaneous">
    <text evidence="1">The reaction proceeds by a bi uni uni bi ping pong mechanism.</text>
</comment>
<comment type="similarity">
    <text evidence="1">Belongs to the pantothenate synthetase family.</text>
</comment>
<organism>
    <name type="scientific">Leptospira biflexa serovar Patoc (strain Patoc 1 / ATCC 23582 / Paris)</name>
    <dbReference type="NCBI Taxonomy" id="456481"/>
    <lineage>
        <taxon>Bacteria</taxon>
        <taxon>Pseudomonadati</taxon>
        <taxon>Spirochaetota</taxon>
        <taxon>Spirochaetia</taxon>
        <taxon>Leptospirales</taxon>
        <taxon>Leptospiraceae</taxon>
        <taxon>Leptospira</taxon>
    </lineage>
</organism>